<keyword id="KW-0165">Cleavage on pair of basic residues</keyword>
<keyword id="KW-0903">Direct protein sequencing</keyword>
<keyword id="KW-1015">Disulfide bond</keyword>
<keyword id="KW-0872">Ion channel impairing toxin</keyword>
<keyword id="KW-0166">Nematocyst</keyword>
<keyword id="KW-0528">Neurotoxin</keyword>
<keyword id="KW-0964">Secreted</keyword>
<keyword id="KW-0732">Signal</keyword>
<keyword id="KW-0800">Toxin</keyword>
<keyword id="KW-0738">Voltage-gated sodium channel impairing toxin</keyword>
<feature type="signal peptide" evidence="2">
    <location>
        <begin position="1"/>
        <end position="20"/>
    </location>
</feature>
<feature type="propeptide" id="PRO_0000034863" evidence="3">
    <location>
        <begin position="21"/>
        <end position="31"/>
    </location>
</feature>
<feature type="chain" id="PRO_0000034864" description="Delta-hormotoxin-Cpt1b" evidence="3">
    <location>
        <begin position="34"/>
        <end position="79"/>
    </location>
</feature>
<feature type="disulfide bond" evidence="1">
    <location>
        <begin position="36"/>
        <end position="75"/>
    </location>
</feature>
<feature type="disulfide bond" evidence="1">
    <location>
        <begin position="38"/>
        <end position="66"/>
    </location>
</feature>
<feature type="disulfide bond" evidence="1">
    <location>
        <begin position="56"/>
        <end position="76"/>
    </location>
</feature>
<feature type="sequence conflict" description="In Ref. 2; AA sequence." evidence="8" ref="2">
    <original>Q</original>
    <variation>E</variation>
    <location>
        <position position="78"/>
    </location>
</feature>
<organism>
    <name type="scientific">Calliactis parasitica</name>
    <name type="common">Sea anemone</name>
    <name type="synonym">Actinia parasitica</name>
    <dbReference type="NCBI Taxonomy" id="6114"/>
    <lineage>
        <taxon>Eukaryota</taxon>
        <taxon>Metazoa</taxon>
        <taxon>Cnidaria</taxon>
        <taxon>Anthozoa</taxon>
        <taxon>Hexacorallia</taxon>
        <taxon>Actiniaria</taxon>
        <taxon>Nynantheae</taxon>
        <taxon>Hormathiidae</taxon>
        <taxon>Calliactis</taxon>
    </lineage>
</organism>
<comment type="function">
    <text evidence="3 4">In neuromuscular preparation of crustaceans, the toxin increased neurotransmitter release, causing repetitive firing of the axons. May affect sodium channels (Nav).</text>
</comment>
<comment type="subcellular location">
    <subcellularLocation>
        <location evidence="8">Secreted</location>
    </subcellularLocation>
    <subcellularLocation>
        <location evidence="8">Nematocyst</location>
    </subcellularLocation>
</comment>
<comment type="similarity">
    <text evidence="8">Belongs to the sea anemone sodium channel inhibitory toxin family.</text>
</comment>
<proteinExistence type="evidence at protein level"/>
<dbReference type="EMBL" id="S69403">
    <property type="protein sequence ID" value="AAB30193.1"/>
    <property type="molecule type" value="Genomic_DNA"/>
</dbReference>
<dbReference type="PIR" id="A31863">
    <property type="entry name" value="A31863"/>
</dbReference>
<dbReference type="SMR" id="P14531"/>
<dbReference type="GO" id="GO:0005576">
    <property type="term" value="C:extracellular region"/>
    <property type="evidence" value="ECO:0007669"/>
    <property type="project" value="UniProtKB-SubCell"/>
</dbReference>
<dbReference type="GO" id="GO:0042151">
    <property type="term" value="C:nematocyst"/>
    <property type="evidence" value="ECO:0007669"/>
    <property type="project" value="UniProtKB-SubCell"/>
</dbReference>
<dbReference type="GO" id="GO:0017080">
    <property type="term" value="F:sodium channel regulator activity"/>
    <property type="evidence" value="ECO:0007669"/>
    <property type="project" value="UniProtKB-KW"/>
</dbReference>
<dbReference type="GO" id="GO:0090729">
    <property type="term" value="F:toxin activity"/>
    <property type="evidence" value="ECO:0007669"/>
    <property type="project" value="UniProtKB-KW"/>
</dbReference>
<dbReference type="Gene3D" id="2.20.20.10">
    <property type="entry name" value="Anthopleurin-A"/>
    <property type="match status" value="1"/>
</dbReference>
<dbReference type="InterPro" id="IPR023355">
    <property type="entry name" value="Myo_ane_neurotoxin_sf"/>
</dbReference>
<dbReference type="Pfam" id="PF00706">
    <property type="entry name" value="Toxin_4"/>
    <property type="match status" value="1"/>
</dbReference>
<dbReference type="SUPFAM" id="SSF57392">
    <property type="entry name" value="Defensin-like"/>
    <property type="match status" value="1"/>
</dbReference>
<protein>
    <recommendedName>
        <fullName evidence="5">Delta-hormotoxin-Cpt1b</fullName>
        <shortName evidence="5">Delta-HRTX-Cpt1b</shortName>
    </recommendedName>
    <alternativeName>
        <fullName evidence="6">Calitoxin</fullName>
        <shortName evidence="6">CLX</shortName>
    </alternativeName>
    <alternativeName>
        <fullName evidence="7">Calitoxin-1</fullName>
        <shortName evidence="7">CLX-1</shortName>
    </alternativeName>
    <alternativeName>
        <fullName>Neurotoxic peptide</fullName>
    </alternativeName>
</protein>
<accession>P14531</accession>
<name>TXCL1_CALPA</name>
<sequence length="79" mass="8728">MKTQVLALFVLCVLFCLAESRTTLNKRNDIEKRIECKCEGDAPDLSHMTGTVYFSCKGGDGSWSKCNTYTAVADCCHQA</sequence>
<evidence type="ECO:0000250" key="1">
    <source>
        <dbReference type="UniProtKB" id="P19651"/>
    </source>
</evidence>
<evidence type="ECO:0000255" key="2"/>
<evidence type="ECO:0000269" key="3">
    <source>
    </source>
</evidence>
<evidence type="ECO:0000269" key="4">
    <source>
    </source>
</evidence>
<evidence type="ECO:0000303" key="5">
    <source>
    </source>
</evidence>
<evidence type="ECO:0000303" key="6">
    <source>
    </source>
</evidence>
<evidence type="ECO:0000303" key="7">
    <source>
    </source>
</evidence>
<evidence type="ECO:0000305" key="8"/>
<reference key="1">
    <citation type="journal article" date="1994" name="Gene">
        <title>Isolation and characterization of two genes encoding calitoxins, neurotoxic peptides from Calliactis parasitica (Cnidaria).</title>
        <authorList>
            <person name="Spagnuolo A."/>
            <person name="Zanetti L."/>
            <person name="Cariello L."/>
            <person name="Piccoli R."/>
        </authorList>
    </citation>
    <scope>NUCLEOTIDE SEQUENCE [GENOMIC DNA]</scope>
</reference>
<reference key="2">
    <citation type="journal article" date="1989" name="Biochemistry">
        <title>Calitoxin, a neurotoxic peptide from the sea anemone Calliactis parasitica: amino acid sequence and electrophysiological properties.</title>
        <authorList>
            <person name="Cariello L."/>
            <person name="de Santis A."/>
            <person name="Fiore F."/>
            <person name="Piccoli R."/>
            <person name="Spagnuolo A."/>
            <person name="Zanetti L."/>
            <person name="Parente A."/>
        </authorList>
    </citation>
    <scope>PROTEIN SEQUENCE OF 34-79</scope>
    <scope>FUNCTION</scope>
</reference>
<reference key="3">
    <citation type="journal article" date="2012" name="Toxicon">
        <title>Development of a rational nomenclature for naming peptide and protein toxins from sea anemones.</title>
        <authorList>
            <person name="Oliveira J.S."/>
            <person name="Fuentes-Silva D."/>
            <person name="King G.F."/>
        </authorList>
    </citation>
    <scope>NOMENCLATURE</scope>
</reference>